<gene>
    <name type="primary">hisN</name>
    <name type="synonym">impC</name>
    <name type="ordered locus">Rv3137</name>
</gene>
<organism>
    <name type="scientific">Mycobacterium tuberculosis (strain ATCC 25618 / H37Rv)</name>
    <dbReference type="NCBI Taxonomy" id="83332"/>
    <lineage>
        <taxon>Bacteria</taxon>
        <taxon>Bacillati</taxon>
        <taxon>Actinomycetota</taxon>
        <taxon>Actinomycetes</taxon>
        <taxon>Mycobacteriales</taxon>
        <taxon>Mycobacteriaceae</taxon>
        <taxon>Mycobacterium</taxon>
        <taxon>Mycobacterium tuberculosis complex</taxon>
    </lineage>
</organism>
<sequence>MSHDDLMLALALADRADELTRVRFGALDLRIDTKPDLTPVTDADRAVESDVRQTLGRDRPGDGVLGEEFGGSTTFTGRQWIVDPIDGTKNFVRGVPVWASLIALLEDGVPSVGVVSAPALQRRWWAARGRGAFASVDGARPHRLSVSSVAELHSASLSFSSLSGWARPGLRERFIGLTDTVWRVRAYGDFLSYCLVAEGAVDIAAEPQVSVWDLAALDIVVREAGGRLTSLDGVAGPHGGSAVATNGLLHDEVLTRLNAG</sequence>
<evidence type="ECO:0000250" key="1"/>
<evidence type="ECO:0000269" key="2">
    <source>
    </source>
</evidence>
<evidence type="ECO:0000305" key="3"/>
<evidence type="ECO:0007829" key="4">
    <source>
        <dbReference type="PDB" id="5YHT"/>
    </source>
</evidence>
<evidence type="ECO:0007829" key="5">
    <source>
        <dbReference type="PDB" id="5ZON"/>
    </source>
</evidence>
<feature type="chain" id="PRO_0000404323" description="Histidinol-phosphatase">
    <location>
        <begin position="1"/>
        <end position="260"/>
    </location>
</feature>
<feature type="binding site" evidence="1">
    <location>
        <position position="67"/>
    </location>
    <ligand>
        <name>Mg(2+)</name>
        <dbReference type="ChEBI" id="CHEBI:18420"/>
        <label>1</label>
    </ligand>
</feature>
<feature type="binding site" evidence="1">
    <location>
        <position position="67"/>
    </location>
    <ligand>
        <name>substrate</name>
    </ligand>
</feature>
<feature type="binding site" evidence="1">
    <location>
        <position position="83"/>
    </location>
    <ligand>
        <name>Mg(2+)</name>
        <dbReference type="ChEBI" id="CHEBI:18420"/>
        <label>1</label>
    </ligand>
</feature>
<feature type="binding site" evidence="1">
    <location>
        <position position="83"/>
    </location>
    <ligand>
        <name>Mg(2+)</name>
        <dbReference type="ChEBI" id="CHEBI:18420"/>
        <label>2</label>
    </ligand>
</feature>
<feature type="binding site" evidence="1">
    <location>
        <begin position="85"/>
        <end position="88"/>
    </location>
    <ligand>
        <name>substrate</name>
    </ligand>
</feature>
<feature type="binding site" evidence="1">
    <location>
        <position position="85"/>
    </location>
    <ligand>
        <name>Mg(2+)</name>
        <dbReference type="ChEBI" id="CHEBI:18420"/>
        <label>1</label>
    </ligand>
</feature>
<feature type="binding site" evidence="1">
    <location>
        <position position="86"/>
    </location>
    <ligand>
        <name>Mg(2+)</name>
        <dbReference type="ChEBI" id="CHEBI:18420"/>
        <label>2</label>
    </ligand>
</feature>
<feature type="binding site" evidence="1">
    <location>
        <position position="185"/>
    </location>
    <ligand>
        <name>substrate</name>
    </ligand>
</feature>
<feature type="binding site" evidence="1">
    <location>
        <position position="213"/>
    </location>
    <ligand>
        <name>Mg(2+)</name>
        <dbReference type="ChEBI" id="CHEBI:18420"/>
        <label>2</label>
    </ligand>
</feature>
<feature type="binding site" evidence="1">
    <location>
        <position position="213"/>
    </location>
    <ligand>
        <name>substrate</name>
    </ligand>
</feature>
<feature type="mutagenesis site" description="Causes a probable loss of enzymatic activity." evidence="2">
    <original>D</original>
    <variation>N</variation>
    <location>
        <position position="86"/>
    </location>
</feature>
<feature type="helix" evidence="5">
    <location>
        <begin position="5"/>
        <end position="25"/>
    </location>
</feature>
<feature type="strand" evidence="5">
    <location>
        <begin position="32"/>
        <end position="34"/>
    </location>
</feature>
<feature type="helix" evidence="5">
    <location>
        <begin position="38"/>
        <end position="58"/>
    </location>
</feature>
<feature type="strand" evidence="5">
    <location>
        <begin position="63"/>
        <end position="66"/>
    </location>
</feature>
<feature type="turn" evidence="5">
    <location>
        <begin position="67"/>
        <end position="69"/>
    </location>
</feature>
<feature type="strand" evidence="5">
    <location>
        <begin position="75"/>
        <end position="86"/>
    </location>
</feature>
<feature type="helix" evidence="5">
    <location>
        <begin position="88"/>
        <end position="91"/>
    </location>
</feature>
<feature type="turn" evidence="5">
    <location>
        <begin position="92"/>
        <end position="94"/>
    </location>
</feature>
<feature type="strand" evidence="5">
    <location>
        <begin position="99"/>
        <end position="106"/>
    </location>
</feature>
<feature type="strand" evidence="5">
    <location>
        <begin position="109"/>
        <end position="117"/>
    </location>
</feature>
<feature type="helix" evidence="5">
    <location>
        <begin position="118"/>
        <end position="120"/>
    </location>
</feature>
<feature type="strand" evidence="5">
    <location>
        <begin position="122"/>
        <end position="127"/>
    </location>
</feature>
<feature type="turn" evidence="4">
    <location>
        <begin position="128"/>
        <end position="130"/>
    </location>
</feature>
<feature type="strand" evidence="5">
    <location>
        <begin position="132"/>
        <end position="136"/>
    </location>
</feature>
<feature type="helix" evidence="5">
    <location>
        <begin position="152"/>
        <end position="154"/>
    </location>
</feature>
<feature type="strand" evidence="5">
    <location>
        <begin position="156"/>
        <end position="158"/>
    </location>
</feature>
<feature type="helix" evidence="5">
    <location>
        <begin position="163"/>
        <end position="165"/>
    </location>
</feature>
<feature type="turn" evidence="5">
    <location>
        <begin position="166"/>
        <end position="169"/>
    </location>
</feature>
<feature type="helix" evidence="5">
    <location>
        <begin position="171"/>
        <end position="180"/>
    </location>
</feature>
<feature type="strand" evidence="5">
    <location>
        <begin position="181"/>
        <end position="186"/>
    </location>
</feature>
<feature type="helix" evidence="5">
    <location>
        <begin position="189"/>
        <end position="197"/>
    </location>
</feature>
<feature type="strand" evidence="5">
    <location>
        <begin position="202"/>
        <end position="208"/>
    </location>
</feature>
<feature type="helix" evidence="5">
    <location>
        <begin position="211"/>
        <end position="223"/>
    </location>
</feature>
<feature type="strand" evidence="5">
    <location>
        <begin position="227"/>
        <end position="229"/>
    </location>
</feature>
<feature type="strand" evidence="5">
    <location>
        <begin position="239"/>
        <end position="245"/>
    </location>
</feature>
<feature type="helix" evidence="5">
    <location>
        <begin position="250"/>
        <end position="257"/>
    </location>
</feature>
<protein>
    <recommendedName>
        <fullName>Histidinol-phosphatase</fullName>
        <shortName>HolPase</shortName>
        <ecNumber>3.1.3.15</ecNumber>
    </recommendedName>
    <alternativeName>
        <fullName>Histidinol-phosphate phosphatase</fullName>
    </alternativeName>
</protein>
<reference key="1">
    <citation type="journal article" date="1998" name="Nature">
        <title>Deciphering the biology of Mycobacterium tuberculosis from the complete genome sequence.</title>
        <authorList>
            <person name="Cole S.T."/>
            <person name="Brosch R."/>
            <person name="Parkhill J."/>
            <person name="Garnier T."/>
            <person name="Churcher C.M."/>
            <person name="Harris D.E."/>
            <person name="Gordon S.V."/>
            <person name="Eiglmeier K."/>
            <person name="Gas S."/>
            <person name="Barry C.E. III"/>
            <person name="Tekaia F."/>
            <person name="Badcock K."/>
            <person name="Basham D."/>
            <person name="Brown D."/>
            <person name="Chillingworth T."/>
            <person name="Connor R."/>
            <person name="Davies R.M."/>
            <person name="Devlin K."/>
            <person name="Feltwell T."/>
            <person name="Gentles S."/>
            <person name="Hamlin N."/>
            <person name="Holroyd S."/>
            <person name="Hornsby T."/>
            <person name="Jagels K."/>
            <person name="Krogh A."/>
            <person name="McLean J."/>
            <person name="Moule S."/>
            <person name="Murphy L.D."/>
            <person name="Oliver S."/>
            <person name="Osborne J."/>
            <person name="Quail M.A."/>
            <person name="Rajandream M.A."/>
            <person name="Rogers J."/>
            <person name="Rutter S."/>
            <person name="Seeger K."/>
            <person name="Skelton S."/>
            <person name="Squares S."/>
            <person name="Squares R."/>
            <person name="Sulston J.E."/>
            <person name="Taylor K."/>
            <person name="Whitehead S."/>
            <person name="Barrell B.G."/>
        </authorList>
    </citation>
    <scope>NUCLEOTIDE SEQUENCE [LARGE SCALE GENOMIC DNA]</scope>
    <source>
        <strain>ATCC 25618 / H37Rv</strain>
    </source>
</reference>
<reference key="2">
    <citation type="journal article" date="2008" name="BMC Syst. Biol.">
        <title>targetTB: a target identification pipeline for Mycobacterium tuberculosis through an interactome, reactome and genome-scale structural analysis.</title>
        <authorList>
            <person name="Raman K."/>
            <person name="Yeturu K."/>
            <person name="Chandra N."/>
        </authorList>
    </citation>
    <scope>IDENTIFICATION AS A DRUG TARGET [LARGE SCALE ANALYSIS]</scope>
</reference>
<reference key="3">
    <citation type="journal article" date="2010" name="BMC Microbiol.">
        <title>Inositol monophosphate phosphatase genes of Mycobacterium tuberculosis.</title>
        <authorList>
            <person name="Movahedzadeh F."/>
            <person name="Wheeler P.R."/>
            <person name="Dinadayala P."/>
            <person name="Av-Gay Y."/>
            <person name="Parish T."/>
            <person name="Daffe M."/>
            <person name="Stoker N.G."/>
        </authorList>
    </citation>
    <scope>DISRUPTION PHENOTYPE</scope>
    <scope>ESSENTIAL GENE</scope>
    <scope>INDUCTION</scope>
    <scope>MUTAGENESIS OF ASP-86</scope>
    <source>
        <strain>ATCC 25618 / H37Rv</strain>
    </source>
</reference>
<reference key="4">
    <citation type="journal article" date="2011" name="Mol. Cell. Proteomics">
        <title>Proteogenomic analysis of Mycobacterium tuberculosis by high resolution mass spectrometry.</title>
        <authorList>
            <person name="Kelkar D.S."/>
            <person name="Kumar D."/>
            <person name="Kumar P."/>
            <person name="Balakrishnan L."/>
            <person name="Muthusamy B."/>
            <person name="Yadav A.K."/>
            <person name="Shrivastava P."/>
            <person name="Marimuthu A."/>
            <person name="Anand S."/>
            <person name="Sundaram H."/>
            <person name="Kingsbury R."/>
            <person name="Harsha H.C."/>
            <person name="Nair B."/>
            <person name="Prasad T.S."/>
            <person name="Chauhan D.S."/>
            <person name="Katoch K."/>
            <person name="Katoch V.M."/>
            <person name="Kumar P."/>
            <person name="Chaerkady R."/>
            <person name="Ramachandran S."/>
            <person name="Dash D."/>
            <person name="Pandey A."/>
        </authorList>
    </citation>
    <scope>IDENTIFICATION BY MASS SPECTROMETRY [LARGE SCALE ANALYSIS]</scope>
    <source>
        <strain>ATCC 25618 / H37Rv</strain>
    </source>
</reference>
<dbReference type="EC" id="3.1.3.15"/>
<dbReference type="EMBL" id="AL123456">
    <property type="protein sequence ID" value="CCP45948.1"/>
    <property type="molecule type" value="Genomic_DNA"/>
</dbReference>
<dbReference type="PIR" id="B70646">
    <property type="entry name" value="B70646"/>
</dbReference>
<dbReference type="RefSeq" id="NP_217653.1">
    <property type="nucleotide sequence ID" value="NC_000962.3"/>
</dbReference>
<dbReference type="RefSeq" id="WP_003917127.1">
    <property type="nucleotide sequence ID" value="NZ_NVQJ01000019.1"/>
</dbReference>
<dbReference type="PDB" id="5YHT">
    <property type="method" value="X-ray"/>
    <property type="resolution" value="2.87 A"/>
    <property type="chains" value="A/B=2-260"/>
</dbReference>
<dbReference type="PDB" id="5ZON">
    <property type="method" value="X-ray"/>
    <property type="resolution" value="1.94 A"/>
    <property type="chains" value="A/B/C/D=2-260"/>
</dbReference>
<dbReference type="PDBsum" id="5YHT"/>
<dbReference type="PDBsum" id="5ZON"/>
<dbReference type="SMR" id="P95189"/>
<dbReference type="FunCoup" id="P95189">
    <property type="interactions" value="117"/>
</dbReference>
<dbReference type="STRING" id="83332.Rv3137"/>
<dbReference type="PaxDb" id="83332-Rv3137"/>
<dbReference type="DNASU" id="888827"/>
<dbReference type="GeneID" id="888827"/>
<dbReference type="KEGG" id="mtu:Rv3137"/>
<dbReference type="KEGG" id="mtv:RVBD_3137"/>
<dbReference type="TubercuList" id="Rv3137"/>
<dbReference type="eggNOG" id="COG0483">
    <property type="taxonomic scope" value="Bacteria"/>
</dbReference>
<dbReference type="InParanoid" id="P95189"/>
<dbReference type="OrthoDB" id="9772456at2"/>
<dbReference type="PhylomeDB" id="P95189"/>
<dbReference type="BRENDA" id="3.1.3.15">
    <property type="organism ID" value="3445"/>
</dbReference>
<dbReference type="Reactome" id="R-MTU-879299">
    <property type="pathway name" value="Mycothiol biosynthesis"/>
</dbReference>
<dbReference type="UniPathway" id="UPA00031">
    <property type="reaction ID" value="UER00013"/>
</dbReference>
<dbReference type="Proteomes" id="UP000001584">
    <property type="component" value="Chromosome"/>
</dbReference>
<dbReference type="GO" id="GO:0005829">
    <property type="term" value="C:cytosol"/>
    <property type="evidence" value="ECO:0000304"/>
    <property type="project" value="Reactome"/>
</dbReference>
<dbReference type="GO" id="GO:0005886">
    <property type="term" value="C:plasma membrane"/>
    <property type="evidence" value="ECO:0007005"/>
    <property type="project" value="MTBBASE"/>
</dbReference>
<dbReference type="GO" id="GO:0004401">
    <property type="term" value="F:histidinol-phosphatase activity"/>
    <property type="evidence" value="ECO:0000250"/>
    <property type="project" value="UniProtKB"/>
</dbReference>
<dbReference type="GO" id="GO:0008934">
    <property type="term" value="F:inositol monophosphate 1-phosphatase activity"/>
    <property type="evidence" value="ECO:0000304"/>
    <property type="project" value="Reactome"/>
</dbReference>
<dbReference type="GO" id="GO:0046872">
    <property type="term" value="F:metal ion binding"/>
    <property type="evidence" value="ECO:0007669"/>
    <property type="project" value="UniProtKB-KW"/>
</dbReference>
<dbReference type="GO" id="GO:0042578">
    <property type="term" value="F:phosphoric ester hydrolase activity"/>
    <property type="evidence" value="ECO:0000318"/>
    <property type="project" value="GO_Central"/>
</dbReference>
<dbReference type="GO" id="GO:0000105">
    <property type="term" value="P:L-histidine biosynthetic process"/>
    <property type="evidence" value="ECO:0000250"/>
    <property type="project" value="UniProtKB"/>
</dbReference>
<dbReference type="GO" id="GO:0010125">
    <property type="term" value="P:mycothiol biosynthetic process"/>
    <property type="evidence" value="ECO:0000304"/>
    <property type="project" value="Reactome"/>
</dbReference>
<dbReference type="CDD" id="cd01641">
    <property type="entry name" value="Bacterial_IMPase_like_1"/>
    <property type="match status" value="1"/>
</dbReference>
<dbReference type="FunFam" id="3.30.540.10:FF:000003">
    <property type="entry name" value="Inositol-1-monophosphatase"/>
    <property type="match status" value="1"/>
</dbReference>
<dbReference type="Gene3D" id="3.40.190.80">
    <property type="match status" value="1"/>
</dbReference>
<dbReference type="Gene3D" id="3.30.540.10">
    <property type="entry name" value="Fructose-1,6-Bisphosphatase, subunit A, domain 1"/>
    <property type="match status" value="1"/>
</dbReference>
<dbReference type="InterPro" id="IPR011809">
    <property type="entry name" value="His_9_proposed"/>
</dbReference>
<dbReference type="InterPro" id="IPR020583">
    <property type="entry name" value="Inositol_monoP_metal-BS"/>
</dbReference>
<dbReference type="InterPro" id="IPR000760">
    <property type="entry name" value="Inositol_monophosphatase-like"/>
</dbReference>
<dbReference type="NCBIfam" id="TIGR02067">
    <property type="entry name" value="his_9_HisN"/>
    <property type="match status" value="1"/>
</dbReference>
<dbReference type="PANTHER" id="PTHR20854">
    <property type="entry name" value="INOSITOL MONOPHOSPHATASE"/>
    <property type="match status" value="1"/>
</dbReference>
<dbReference type="PANTHER" id="PTHR20854:SF4">
    <property type="entry name" value="INOSITOL-1-MONOPHOSPHATASE-RELATED"/>
    <property type="match status" value="1"/>
</dbReference>
<dbReference type="Pfam" id="PF00459">
    <property type="entry name" value="Inositol_P"/>
    <property type="match status" value="1"/>
</dbReference>
<dbReference type="PRINTS" id="PR00377">
    <property type="entry name" value="IMPHPHTASES"/>
</dbReference>
<dbReference type="SUPFAM" id="SSF56655">
    <property type="entry name" value="Carbohydrate phosphatase"/>
    <property type="match status" value="1"/>
</dbReference>
<dbReference type="PROSITE" id="PS00629">
    <property type="entry name" value="IMP_1"/>
    <property type="match status" value="1"/>
</dbReference>
<name>HISN_MYCTU</name>
<comment type="function">
    <text evidence="1">Catalyzes the dephosphorylation of histidinol-phosphate to histidinol, the direct precursor of histidine.</text>
</comment>
<comment type="catalytic activity">
    <reaction>
        <text>L-histidinol phosphate + H2O = L-histidinol + phosphate</text>
        <dbReference type="Rhea" id="RHEA:14465"/>
        <dbReference type="ChEBI" id="CHEBI:15377"/>
        <dbReference type="ChEBI" id="CHEBI:43474"/>
        <dbReference type="ChEBI" id="CHEBI:57699"/>
        <dbReference type="ChEBI" id="CHEBI:57980"/>
        <dbReference type="EC" id="3.1.3.15"/>
    </reaction>
</comment>
<comment type="cofactor">
    <cofactor evidence="1">
        <name>Mg(2+)</name>
        <dbReference type="ChEBI" id="CHEBI:18420"/>
    </cofactor>
</comment>
<comment type="pathway">
    <text>Amino-acid biosynthesis; L-histidine biosynthesis; L-histidine from 5-phospho-alpha-D-ribose 1-diphosphate: step 8/9.</text>
</comment>
<comment type="induction">
    <text evidence="2">When comparing gene expression levels of the four IMPase family genes in exponential cultures of M.tuberculosis, the level of cysQ is the highest, almost equal to sigA; impA and impC are expressed at approximately 40% of this level, while suhB is lowest, at 12% of the cysQ level.</text>
</comment>
<comment type="disruption phenotype">
    <text evidence="2">Strains lacking this gene appear to be not viable, even in the presence of high levels of exogenous inositol.</text>
</comment>
<comment type="similarity">
    <text evidence="3">Belongs to the inositol monophosphatase superfamily.</text>
</comment>
<keyword id="KW-0002">3D-structure</keyword>
<keyword id="KW-0028">Amino-acid biosynthesis</keyword>
<keyword id="KW-0368">Histidine biosynthesis</keyword>
<keyword id="KW-0378">Hydrolase</keyword>
<keyword id="KW-0460">Magnesium</keyword>
<keyword id="KW-0479">Metal-binding</keyword>
<keyword id="KW-1185">Reference proteome</keyword>
<accession>P95189</accession>
<accession>L0TBY2</accession>
<proteinExistence type="evidence at protein level"/>